<name>LTG25_ARATH</name>
<comment type="function">
    <text evidence="2">Probable lipid transfer protein.</text>
</comment>
<comment type="subcellular location">
    <subcellularLocation>
        <location evidence="3">Cell membrane</location>
        <topology evidence="3">Lipid-anchor</topology>
        <topology evidence="3">GPI-anchor</topology>
    </subcellularLocation>
</comment>
<comment type="similarity">
    <text evidence="7">Belongs to the plant LTP family.</text>
</comment>
<reference key="1">
    <citation type="journal article" date="1998" name="Nature">
        <title>Analysis of 1.9 Mb of contiguous sequence from chromosome 4 of Arabidopsis thaliana.</title>
        <authorList>
            <person name="Bevan M."/>
            <person name="Bancroft I."/>
            <person name="Bent E."/>
            <person name="Love K."/>
            <person name="Goodman H.M."/>
            <person name="Dean C."/>
            <person name="Bergkamp R."/>
            <person name="Dirkse W."/>
            <person name="van Staveren M."/>
            <person name="Stiekema W."/>
            <person name="Drost L."/>
            <person name="Ridley P."/>
            <person name="Hudson S.-A."/>
            <person name="Patel K."/>
            <person name="Murphy G."/>
            <person name="Piffanelli P."/>
            <person name="Wedler H."/>
            <person name="Wedler E."/>
            <person name="Wambutt R."/>
            <person name="Weitzenegger T."/>
            <person name="Pohl T."/>
            <person name="Terryn N."/>
            <person name="Gielen J."/>
            <person name="Villarroel R."/>
            <person name="De Clercq R."/>
            <person name="van Montagu M."/>
            <person name="Lecharny A."/>
            <person name="Aubourg S."/>
            <person name="Gy I."/>
            <person name="Kreis M."/>
            <person name="Lao N."/>
            <person name="Kavanagh T."/>
            <person name="Hempel S."/>
            <person name="Kotter P."/>
            <person name="Entian K.-D."/>
            <person name="Rieger M."/>
            <person name="Schaefer M."/>
            <person name="Funk B."/>
            <person name="Mueller-Auer S."/>
            <person name="Silvey M."/>
            <person name="James R."/>
            <person name="Monfort A."/>
            <person name="Pons A."/>
            <person name="Puigdomenech P."/>
            <person name="Douka A."/>
            <person name="Voukelatou E."/>
            <person name="Milioni D."/>
            <person name="Hatzopoulos P."/>
            <person name="Piravandi E."/>
            <person name="Obermaier B."/>
            <person name="Hilbert H."/>
            <person name="Duesterhoeft A."/>
            <person name="Moores T."/>
            <person name="Jones J.D.G."/>
            <person name="Eneva T."/>
            <person name="Palme K."/>
            <person name="Benes V."/>
            <person name="Rechmann S."/>
            <person name="Ansorge W."/>
            <person name="Cooke R."/>
            <person name="Berger C."/>
            <person name="Delseny M."/>
            <person name="Voet M."/>
            <person name="Volckaert G."/>
            <person name="Mewes H.-W."/>
            <person name="Klosterman S."/>
            <person name="Schueller C."/>
            <person name="Chalwatzis N."/>
        </authorList>
    </citation>
    <scope>NUCLEOTIDE SEQUENCE [LARGE SCALE GENOMIC DNA]</scope>
    <source>
        <strain>cv. Columbia</strain>
    </source>
</reference>
<reference key="2">
    <citation type="journal article" date="2017" name="Plant J.">
        <title>Araport11: a complete reannotation of the Arabidopsis thaliana reference genome.</title>
        <authorList>
            <person name="Cheng C.Y."/>
            <person name="Krishnakumar V."/>
            <person name="Chan A.P."/>
            <person name="Thibaud-Nissen F."/>
            <person name="Schobel S."/>
            <person name="Town C.D."/>
        </authorList>
    </citation>
    <scope>GENOME REANNOTATION</scope>
    <source>
        <strain>cv. Columbia</strain>
    </source>
</reference>
<reference key="3">
    <citation type="journal article" date="2013" name="Plant Mol. Biol.">
        <title>Coexpression patterns indicate that GPI-anchored non-specific lipid transfer proteins are involved in accumulation of cuticular wax, suberin and sporopollenin.</title>
        <authorList>
            <person name="Edstam M.M."/>
            <person name="Blomqvist K."/>
            <person name="Ekloef A."/>
            <person name="Wennergren U."/>
            <person name="Edqvist J."/>
        </authorList>
    </citation>
    <scope>GENE FAMILY</scope>
    <scope>NOMENCLATURE</scope>
    <source>
        <strain>cv. Columbia</strain>
    </source>
</reference>
<proteinExistence type="inferred from homology"/>
<sequence>MATKITGVFILILTITFSSSSAVTATQQAPSSSPPVLTCTEELVMFSPCLPYVSSPPNNMSETPDPICCSVFTSSVHSSTGNCLCYLLRQPMILGFPLDRSRLISLSQICTDQNSEESFESLCSVSESPELPPLQSIQFTNPFVSGNNVSASPQSVDLAPEVSPSSDLFSPETATLAPPPPPPPLPVLQYFSSDSLKIRNFWFPSTIIMTFATSILARI</sequence>
<dbReference type="EMBL" id="Z97337">
    <property type="status" value="NOT_ANNOTATED_CDS"/>
    <property type="molecule type" value="Genomic_DNA"/>
</dbReference>
<dbReference type="EMBL" id="CP002687">
    <property type="protein sequence ID" value="AEE83502.1"/>
    <property type="molecule type" value="Genomic_DNA"/>
</dbReference>
<dbReference type="RefSeq" id="NP_680688.1">
    <property type="nucleotide sequence ID" value="NM_148322.2"/>
</dbReference>
<dbReference type="GlyCosmos" id="F4JIG1">
    <property type="glycosylation" value="2 sites, No reported glycans"/>
</dbReference>
<dbReference type="GlyGen" id="F4JIG1">
    <property type="glycosylation" value="2 sites"/>
</dbReference>
<dbReference type="PaxDb" id="3702-AT4G14805.1"/>
<dbReference type="EnsemblPlants" id="AT4G14805.1">
    <property type="protein sequence ID" value="AT4G14805.1"/>
    <property type="gene ID" value="AT4G14805"/>
</dbReference>
<dbReference type="GeneID" id="827136"/>
<dbReference type="Gramene" id="AT4G14805.1">
    <property type="protein sequence ID" value="AT4G14805.1"/>
    <property type="gene ID" value="AT4G14805"/>
</dbReference>
<dbReference type="KEGG" id="ath:AT4G14805"/>
<dbReference type="Araport" id="AT4G14805"/>
<dbReference type="TAIR" id="AT4G14805">
    <property type="gene designation" value="LTPG25"/>
</dbReference>
<dbReference type="eggNOG" id="ENOG502SA2F">
    <property type="taxonomic scope" value="Eukaryota"/>
</dbReference>
<dbReference type="HOGENOM" id="CLU_1284867_0_0_1"/>
<dbReference type="InParanoid" id="F4JIG1"/>
<dbReference type="OMA" id="PICCSVF"/>
<dbReference type="PhylomeDB" id="F4JIG1"/>
<dbReference type="PRO" id="PR:F4JIG1"/>
<dbReference type="Proteomes" id="UP000006548">
    <property type="component" value="Chromosome 4"/>
</dbReference>
<dbReference type="ExpressionAtlas" id="F4JIG1">
    <property type="expression patterns" value="baseline and differential"/>
</dbReference>
<dbReference type="GO" id="GO:0005886">
    <property type="term" value="C:plasma membrane"/>
    <property type="evidence" value="ECO:0007669"/>
    <property type="project" value="UniProtKB-SubCell"/>
</dbReference>
<dbReference type="GO" id="GO:0098552">
    <property type="term" value="C:side of membrane"/>
    <property type="evidence" value="ECO:0007669"/>
    <property type="project" value="UniProtKB-KW"/>
</dbReference>
<dbReference type="CDD" id="cd00010">
    <property type="entry name" value="AAI_LTSS"/>
    <property type="match status" value="1"/>
</dbReference>
<dbReference type="Gene3D" id="1.10.110.10">
    <property type="entry name" value="Plant lipid-transfer and hydrophobic proteins"/>
    <property type="match status" value="1"/>
</dbReference>
<dbReference type="InterPro" id="IPR036312">
    <property type="entry name" value="Bifun_inhib/LTP/seed_sf"/>
</dbReference>
<dbReference type="InterPro" id="IPR016140">
    <property type="entry name" value="Bifunc_inhib/LTP/seed_store"/>
</dbReference>
<dbReference type="InterPro" id="IPR053353">
    <property type="entry name" value="Plant_LTP_GPI-anchored"/>
</dbReference>
<dbReference type="PANTHER" id="PTHR35747">
    <property type="entry name" value="BIFUNCTIONAL INHIBITOR/LIPID-TRANSFER PROTEIN/SEED STORAGE 2S ALBUMIN SUPERFAMILY PROTEIN"/>
    <property type="match status" value="1"/>
</dbReference>
<dbReference type="PANTHER" id="PTHR35747:SF2">
    <property type="entry name" value="NON-SPECIFIC LIPID TRANSFER PROTEIN GPI-ANCHORED 25"/>
    <property type="match status" value="1"/>
</dbReference>
<dbReference type="Pfam" id="PF14368">
    <property type="entry name" value="LTP_2"/>
    <property type="match status" value="1"/>
</dbReference>
<dbReference type="SUPFAM" id="SSF47699">
    <property type="entry name" value="Bifunctional inhibitor/lipid-transfer protein/seed storage 2S albumin"/>
    <property type="match status" value="1"/>
</dbReference>
<accession>F4JIG1</accession>
<keyword id="KW-1003">Cell membrane</keyword>
<keyword id="KW-1015">Disulfide bond</keyword>
<keyword id="KW-0325">Glycoprotein</keyword>
<keyword id="KW-0336">GPI-anchor</keyword>
<keyword id="KW-0449">Lipoprotein</keyword>
<keyword id="KW-0472">Membrane</keyword>
<keyword id="KW-1185">Reference proteome</keyword>
<keyword id="KW-0732">Signal</keyword>
<organism>
    <name type="scientific">Arabidopsis thaliana</name>
    <name type="common">Mouse-ear cress</name>
    <dbReference type="NCBI Taxonomy" id="3702"/>
    <lineage>
        <taxon>Eukaryota</taxon>
        <taxon>Viridiplantae</taxon>
        <taxon>Streptophyta</taxon>
        <taxon>Embryophyta</taxon>
        <taxon>Tracheophyta</taxon>
        <taxon>Spermatophyta</taxon>
        <taxon>Magnoliopsida</taxon>
        <taxon>eudicotyledons</taxon>
        <taxon>Gunneridae</taxon>
        <taxon>Pentapetalae</taxon>
        <taxon>rosids</taxon>
        <taxon>malvids</taxon>
        <taxon>Brassicales</taxon>
        <taxon>Brassicaceae</taxon>
        <taxon>Camelineae</taxon>
        <taxon>Arabidopsis</taxon>
    </lineage>
</organism>
<protein>
    <recommendedName>
        <fullName evidence="6">Non-specific lipid transfer protein GPI-anchored 25</fullName>
        <shortName evidence="6">AtLTPG-25</shortName>
        <shortName evidence="6">Protein LTP-GPI-ANCHORED 25</shortName>
    </recommendedName>
</protein>
<gene>
    <name evidence="6" type="primary">LTPG25</name>
    <name evidence="8" type="ordered locus">At4g14805</name>
</gene>
<feature type="signal peptide" evidence="3">
    <location>
        <begin position="1"/>
        <end position="22"/>
    </location>
</feature>
<feature type="chain" id="PRO_5003311527" description="Non-specific lipid transfer protein GPI-anchored 25">
    <location>
        <begin position="23"/>
        <end position="192"/>
    </location>
</feature>
<feature type="propeptide" id="PRO_0000451656" description="Removed in mature form" evidence="3">
    <location>
        <begin position="193"/>
        <end position="219"/>
    </location>
</feature>
<feature type="region of interest" description="Disordered" evidence="5">
    <location>
        <begin position="152"/>
        <end position="181"/>
    </location>
</feature>
<feature type="lipid moiety-binding region" description="GPI-anchor amidated serine" evidence="3">
    <location>
        <position position="192"/>
    </location>
</feature>
<feature type="glycosylation site" description="N-linked (GlcNAc...) asparagine" evidence="4">
    <location>
        <position position="59"/>
    </location>
</feature>
<feature type="glycosylation site" description="N-linked (GlcNAc...) asparagine" evidence="4">
    <location>
        <position position="148"/>
    </location>
</feature>
<feature type="disulfide bond" evidence="1">
    <location>
        <begin position="39"/>
        <end position="85"/>
    </location>
</feature>
<feature type="disulfide bond" evidence="1">
    <location>
        <begin position="49"/>
        <end position="68"/>
    </location>
</feature>
<feature type="disulfide bond" evidence="1">
    <location>
        <begin position="69"/>
        <end position="110"/>
    </location>
</feature>
<feature type="disulfide bond" evidence="1">
    <location>
        <begin position="83"/>
        <end position="123"/>
    </location>
</feature>
<evidence type="ECO:0000250" key="1">
    <source>
        <dbReference type="UniProtKB" id="A0A0B4JDK1"/>
    </source>
</evidence>
<evidence type="ECO:0000250" key="2">
    <source>
        <dbReference type="UniProtKB" id="Q9C7F7"/>
    </source>
</evidence>
<evidence type="ECO:0000255" key="3"/>
<evidence type="ECO:0000255" key="4">
    <source>
        <dbReference type="PROSITE-ProRule" id="PRU00498"/>
    </source>
</evidence>
<evidence type="ECO:0000256" key="5">
    <source>
        <dbReference type="SAM" id="MobiDB-lite"/>
    </source>
</evidence>
<evidence type="ECO:0000303" key="6">
    <source>
    </source>
</evidence>
<evidence type="ECO:0000305" key="7"/>
<evidence type="ECO:0000312" key="8">
    <source>
        <dbReference type="Araport" id="AT4G14805"/>
    </source>
</evidence>